<proteinExistence type="inferred from homology"/>
<evidence type="ECO:0000305" key="1"/>
<feature type="chain" id="PRO_0000217341" description="Uncharacterized protein ycf33">
    <location>
        <begin position="1"/>
        <end position="65"/>
    </location>
</feature>
<name>YCF33_GUITH</name>
<reference key="1">
    <citation type="journal article" date="1999" name="J. Mol. Evol.">
        <title>The plastid genome of the cryptophyte alga, Guillardia theta: complete sequence and conserved synteny groups confirm its common ancestry with red algae.</title>
        <authorList>
            <person name="Douglas S.E."/>
            <person name="Penny S.L."/>
        </authorList>
    </citation>
    <scope>NUCLEOTIDE SEQUENCE [LARGE SCALE GENOMIC DNA]</scope>
</reference>
<comment type="subcellular location">
    <subcellularLocation>
        <location>Plastid</location>
        <location>Chloroplast</location>
    </subcellularLocation>
</comment>
<comment type="similarity">
    <text evidence="1">Belongs to the ycf33 family.</text>
</comment>
<keyword id="KW-0150">Chloroplast</keyword>
<keyword id="KW-0934">Plastid</keyword>
<sequence length="65" mass="7354">MPTFWENLIRYPRFFISSTLGLVFIITGPLFNLLNKPKSALLFAIIVFGILSGLLITLLLMLDII</sequence>
<geneLocation type="chloroplast"/>
<dbReference type="EMBL" id="AF041468">
    <property type="protein sequence ID" value="AAC35739.1"/>
    <property type="molecule type" value="Genomic_DNA"/>
</dbReference>
<dbReference type="RefSeq" id="NP_050805.1">
    <property type="nucleotide sequence ID" value="NC_000926.1"/>
</dbReference>
<dbReference type="SMR" id="O78517"/>
<dbReference type="GeneID" id="857116"/>
<dbReference type="HOGENOM" id="CLU_189266_1_0_1"/>
<dbReference type="GO" id="GO:0009507">
    <property type="term" value="C:chloroplast"/>
    <property type="evidence" value="ECO:0007669"/>
    <property type="project" value="UniProtKB-SubCell"/>
</dbReference>
<dbReference type="InterPro" id="IPR008470">
    <property type="entry name" value="Uncharacterised_Ycf33"/>
</dbReference>
<dbReference type="Pfam" id="PF05421">
    <property type="entry name" value="DUF751"/>
    <property type="match status" value="1"/>
</dbReference>
<gene>
    <name type="primary">ycf33</name>
</gene>
<protein>
    <recommendedName>
        <fullName>Uncharacterized protein ycf33</fullName>
    </recommendedName>
</protein>
<accession>O78517</accession>
<organism>
    <name type="scientific">Guillardia theta</name>
    <name type="common">Cryptophyte</name>
    <name type="synonym">Cryptomonas phi</name>
    <dbReference type="NCBI Taxonomy" id="55529"/>
    <lineage>
        <taxon>Eukaryota</taxon>
        <taxon>Cryptophyceae</taxon>
        <taxon>Pyrenomonadales</taxon>
        <taxon>Geminigeraceae</taxon>
        <taxon>Guillardia</taxon>
    </lineage>
</organism>